<protein>
    <recommendedName>
        <fullName evidence="1">Adenylate kinase</fullName>
        <shortName evidence="1">AK</shortName>
        <ecNumber evidence="1">2.7.4.3</ecNumber>
    </recommendedName>
    <alternativeName>
        <fullName evidence="1">ATP-AMP transphosphorylase</fullName>
    </alternativeName>
    <alternativeName>
        <fullName evidence="1">ATP:AMP phosphotransferase</fullName>
    </alternativeName>
    <alternativeName>
        <fullName evidence="1">Adenylate monophosphate kinase</fullName>
    </alternativeName>
</protein>
<evidence type="ECO:0000255" key="1">
    <source>
        <dbReference type="HAMAP-Rule" id="MF_00235"/>
    </source>
</evidence>
<evidence type="ECO:0000256" key="2">
    <source>
        <dbReference type="SAM" id="MobiDB-lite"/>
    </source>
</evidence>
<keyword id="KW-0067">ATP-binding</keyword>
<keyword id="KW-0963">Cytoplasm</keyword>
<keyword id="KW-0418">Kinase</keyword>
<keyword id="KW-0545">Nucleotide biosynthesis</keyword>
<keyword id="KW-0547">Nucleotide-binding</keyword>
<keyword id="KW-1185">Reference proteome</keyword>
<keyword id="KW-0808">Transferase</keyword>
<feature type="chain" id="PRO_0000158764" description="Adenylate kinase">
    <location>
        <begin position="1"/>
        <end position="197"/>
    </location>
</feature>
<feature type="region of interest" description="NMP" evidence="1">
    <location>
        <begin position="36"/>
        <end position="65"/>
    </location>
</feature>
<feature type="region of interest" description="LID" evidence="1">
    <location>
        <begin position="131"/>
        <end position="147"/>
    </location>
</feature>
<feature type="region of interest" description="Disordered" evidence="2">
    <location>
        <begin position="137"/>
        <end position="158"/>
    </location>
</feature>
<feature type="compositionally biased region" description="Basic and acidic residues" evidence="2">
    <location>
        <begin position="141"/>
        <end position="153"/>
    </location>
</feature>
<feature type="binding site" evidence="1">
    <location>
        <begin position="16"/>
        <end position="21"/>
    </location>
    <ligand>
        <name>ATP</name>
        <dbReference type="ChEBI" id="CHEBI:30616"/>
    </ligand>
</feature>
<feature type="binding site" evidence="1">
    <location>
        <position position="37"/>
    </location>
    <ligand>
        <name>AMP</name>
        <dbReference type="ChEBI" id="CHEBI:456215"/>
    </ligand>
</feature>
<feature type="binding site" evidence="1">
    <location>
        <position position="42"/>
    </location>
    <ligand>
        <name>AMP</name>
        <dbReference type="ChEBI" id="CHEBI:456215"/>
    </ligand>
</feature>
<feature type="binding site" evidence="1">
    <location>
        <begin position="63"/>
        <end position="65"/>
    </location>
    <ligand>
        <name>AMP</name>
        <dbReference type="ChEBI" id="CHEBI:456215"/>
    </ligand>
</feature>
<feature type="binding site" evidence="1">
    <location>
        <begin position="90"/>
        <end position="93"/>
    </location>
    <ligand>
        <name>AMP</name>
        <dbReference type="ChEBI" id="CHEBI:456215"/>
    </ligand>
</feature>
<feature type="binding site" evidence="1">
    <location>
        <position position="97"/>
    </location>
    <ligand>
        <name>AMP</name>
        <dbReference type="ChEBI" id="CHEBI:456215"/>
    </ligand>
</feature>
<feature type="binding site" evidence="1">
    <location>
        <position position="132"/>
    </location>
    <ligand>
        <name>ATP</name>
        <dbReference type="ChEBI" id="CHEBI:30616"/>
    </ligand>
</feature>
<feature type="binding site" evidence="1">
    <location>
        <position position="144"/>
    </location>
    <ligand>
        <name>AMP</name>
        <dbReference type="ChEBI" id="CHEBI:456215"/>
    </ligand>
</feature>
<feature type="binding site" evidence="1">
    <location>
        <position position="155"/>
    </location>
    <ligand>
        <name>AMP</name>
        <dbReference type="ChEBI" id="CHEBI:456215"/>
    </ligand>
</feature>
<feature type="binding site" evidence="1">
    <location>
        <position position="183"/>
    </location>
    <ligand>
        <name>ATP</name>
        <dbReference type="ChEBI" id="CHEBI:30616"/>
    </ligand>
</feature>
<dbReference type="EC" id="2.7.4.3" evidence="1"/>
<dbReference type="EMBL" id="AE000513">
    <property type="protein sequence ID" value="AAF11666.1"/>
    <property type="molecule type" value="Genomic_DNA"/>
</dbReference>
<dbReference type="PIR" id="H75314">
    <property type="entry name" value="H75314"/>
</dbReference>
<dbReference type="RefSeq" id="NP_295840.1">
    <property type="nucleotide sequence ID" value="NC_001263.1"/>
</dbReference>
<dbReference type="RefSeq" id="WP_010888748.1">
    <property type="nucleotide sequence ID" value="NC_001263.1"/>
</dbReference>
<dbReference type="SMR" id="Q9RSK7"/>
<dbReference type="FunCoup" id="Q9RSK7">
    <property type="interactions" value="493"/>
</dbReference>
<dbReference type="STRING" id="243230.DR_2117"/>
<dbReference type="PaxDb" id="243230-DR_2117"/>
<dbReference type="EnsemblBacteria" id="AAF11666">
    <property type="protein sequence ID" value="AAF11666"/>
    <property type="gene ID" value="DR_2117"/>
</dbReference>
<dbReference type="GeneID" id="69518359"/>
<dbReference type="KEGG" id="dra:DR_2117"/>
<dbReference type="PATRIC" id="fig|243230.17.peg.2340"/>
<dbReference type="eggNOG" id="COG0563">
    <property type="taxonomic scope" value="Bacteria"/>
</dbReference>
<dbReference type="HOGENOM" id="CLU_032354_4_1_0"/>
<dbReference type="InParanoid" id="Q9RSK7"/>
<dbReference type="OrthoDB" id="9805030at2"/>
<dbReference type="UniPathway" id="UPA00588">
    <property type="reaction ID" value="UER00649"/>
</dbReference>
<dbReference type="Proteomes" id="UP000002524">
    <property type="component" value="Chromosome 1"/>
</dbReference>
<dbReference type="GO" id="GO:0005737">
    <property type="term" value="C:cytoplasm"/>
    <property type="evidence" value="ECO:0007669"/>
    <property type="project" value="UniProtKB-SubCell"/>
</dbReference>
<dbReference type="GO" id="GO:0004017">
    <property type="term" value="F:adenylate kinase activity"/>
    <property type="evidence" value="ECO:0007669"/>
    <property type="project" value="UniProtKB-UniRule"/>
</dbReference>
<dbReference type="GO" id="GO:0005524">
    <property type="term" value="F:ATP binding"/>
    <property type="evidence" value="ECO:0007669"/>
    <property type="project" value="UniProtKB-UniRule"/>
</dbReference>
<dbReference type="GO" id="GO:0044209">
    <property type="term" value="P:AMP salvage"/>
    <property type="evidence" value="ECO:0007669"/>
    <property type="project" value="UniProtKB-UniRule"/>
</dbReference>
<dbReference type="CDD" id="cd01428">
    <property type="entry name" value="ADK"/>
    <property type="match status" value="1"/>
</dbReference>
<dbReference type="Gene3D" id="3.40.50.300">
    <property type="entry name" value="P-loop containing nucleotide triphosphate hydrolases"/>
    <property type="match status" value="1"/>
</dbReference>
<dbReference type="HAMAP" id="MF_00235">
    <property type="entry name" value="Adenylate_kinase_Adk"/>
    <property type="match status" value="1"/>
</dbReference>
<dbReference type="InterPro" id="IPR006259">
    <property type="entry name" value="Adenyl_kin_sub"/>
</dbReference>
<dbReference type="InterPro" id="IPR000850">
    <property type="entry name" value="Adenylat/UMP-CMP_kin"/>
</dbReference>
<dbReference type="InterPro" id="IPR033690">
    <property type="entry name" value="Adenylat_kinase_CS"/>
</dbReference>
<dbReference type="InterPro" id="IPR027417">
    <property type="entry name" value="P-loop_NTPase"/>
</dbReference>
<dbReference type="NCBIfam" id="TIGR01351">
    <property type="entry name" value="adk"/>
    <property type="match status" value="1"/>
</dbReference>
<dbReference type="NCBIfam" id="NF001381">
    <property type="entry name" value="PRK00279.1-3"/>
    <property type="match status" value="1"/>
</dbReference>
<dbReference type="NCBIfam" id="NF011100">
    <property type="entry name" value="PRK14527.1"/>
    <property type="match status" value="1"/>
</dbReference>
<dbReference type="NCBIfam" id="NF011104">
    <property type="entry name" value="PRK14531.1"/>
    <property type="match status" value="1"/>
</dbReference>
<dbReference type="NCBIfam" id="NF011105">
    <property type="entry name" value="PRK14532.1"/>
    <property type="match status" value="1"/>
</dbReference>
<dbReference type="PANTHER" id="PTHR23359">
    <property type="entry name" value="NUCLEOTIDE KINASE"/>
    <property type="match status" value="1"/>
</dbReference>
<dbReference type="Pfam" id="PF00406">
    <property type="entry name" value="ADK"/>
    <property type="match status" value="1"/>
</dbReference>
<dbReference type="PRINTS" id="PR00094">
    <property type="entry name" value="ADENYLTKNASE"/>
</dbReference>
<dbReference type="SUPFAM" id="SSF52540">
    <property type="entry name" value="P-loop containing nucleoside triphosphate hydrolases"/>
    <property type="match status" value="1"/>
</dbReference>
<dbReference type="PROSITE" id="PS00113">
    <property type="entry name" value="ADENYLATE_KINASE"/>
    <property type="match status" value="1"/>
</dbReference>
<proteinExistence type="inferred from homology"/>
<name>KAD_DEIRA</name>
<organism>
    <name type="scientific">Deinococcus radiodurans (strain ATCC 13939 / DSM 20539 / JCM 16871 / CCUG 27074 / LMG 4051 / NBRC 15346 / NCIMB 9279 / VKM B-1422 / R1)</name>
    <dbReference type="NCBI Taxonomy" id="243230"/>
    <lineage>
        <taxon>Bacteria</taxon>
        <taxon>Thermotogati</taxon>
        <taxon>Deinococcota</taxon>
        <taxon>Deinococci</taxon>
        <taxon>Deinococcales</taxon>
        <taxon>Deinococcaceae</taxon>
        <taxon>Deinococcus</taxon>
    </lineage>
</organism>
<accession>Q9RSK7</accession>
<sequence>MTQSKNKVVIFLGPPGAGKGTQAARLAQEHQLVQLSTGDILRDHVARGTALGQQAGPLMEAGQLVPDELLIALIRDRLADMEPVRVIFDGFPRTQAQAEALDLLLEELGAPVSAVPLLEVPDQVLIDRIVDRGRQAVAEGRAPRADDNEETARKRQQVYREQTQPLIDYYARRGHLYTVDGLGTPDEVYERILSGMH</sequence>
<gene>
    <name evidence="1" type="primary">adk</name>
    <name type="ordered locus">DR_2117</name>
</gene>
<comment type="function">
    <text evidence="1">Catalyzes the reversible transfer of the terminal phosphate group between ATP and AMP. Plays an important role in cellular energy homeostasis and in adenine nucleotide metabolism.</text>
</comment>
<comment type="catalytic activity">
    <reaction evidence="1">
        <text>AMP + ATP = 2 ADP</text>
        <dbReference type="Rhea" id="RHEA:12973"/>
        <dbReference type="ChEBI" id="CHEBI:30616"/>
        <dbReference type="ChEBI" id="CHEBI:456215"/>
        <dbReference type="ChEBI" id="CHEBI:456216"/>
        <dbReference type="EC" id="2.7.4.3"/>
    </reaction>
</comment>
<comment type="pathway">
    <text evidence="1">Purine metabolism; AMP biosynthesis via salvage pathway; AMP from ADP: step 1/1.</text>
</comment>
<comment type="subunit">
    <text evidence="1">Monomer.</text>
</comment>
<comment type="subcellular location">
    <subcellularLocation>
        <location evidence="1">Cytoplasm</location>
    </subcellularLocation>
</comment>
<comment type="domain">
    <text evidence="1">Consists of three domains, a large central CORE domain and two small peripheral domains, NMPbind and LID, which undergo movements during catalysis. The LID domain closes over the site of phosphoryl transfer upon ATP binding. Assembling and dissambling the active center during each catalytic cycle provides an effective means to prevent ATP hydrolysis.</text>
</comment>
<comment type="similarity">
    <text evidence="1">Belongs to the adenylate kinase family.</text>
</comment>
<reference key="1">
    <citation type="journal article" date="1999" name="Science">
        <title>Genome sequence of the radioresistant bacterium Deinococcus radiodurans R1.</title>
        <authorList>
            <person name="White O."/>
            <person name="Eisen J.A."/>
            <person name="Heidelberg J.F."/>
            <person name="Hickey E.K."/>
            <person name="Peterson J.D."/>
            <person name="Dodson R.J."/>
            <person name="Haft D.H."/>
            <person name="Gwinn M.L."/>
            <person name="Nelson W.C."/>
            <person name="Richardson D.L."/>
            <person name="Moffat K.S."/>
            <person name="Qin H."/>
            <person name="Jiang L."/>
            <person name="Pamphile W."/>
            <person name="Crosby M."/>
            <person name="Shen M."/>
            <person name="Vamathevan J.J."/>
            <person name="Lam P."/>
            <person name="McDonald L.A."/>
            <person name="Utterback T.R."/>
            <person name="Zalewski C."/>
            <person name="Makarova K.S."/>
            <person name="Aravind L."/>
            <person name="Daly M.J."/>
            <person name="Minton K.W."/>
            <person name="Fleischmann R.D."/>
            <person name="Ketchum K.A."/>
            <person name="Nelson K.E."/>
            <person name="Salzberg S.L."/>
            <person name="Smith H.O."/>
            <person name="Venter J.C."/>
            <person name="Fraser C.M."/>
        </authorList>
    </citation>
    <scope>NUCLEOTIDE SEQUENCE [LARGE SCALE GENOMIC DNA]</scope>
    <source>
        <strain>ATCC 13939 / DSM 20539 / JCM 16871 / CCUG 27074 / LMG 4051 / NBRC 15346 / NCIMB 9279 / VKM B-1422 / R1</strain>
    </source>
</reference>